<feature type="initiator methionine" description="Removed" evidence="2">
    <location>
        <position position="1"/>
    </location>
</feature>
<feature type="chain" id="PRO_0000071449" description="Serine/threonine-protein phosphatase 2A 56 kDa regulatory subunit alpha isoform">
    <location>
        <begin position="2"/>
        <end position="486"/>
    </location>
</feature>
<feature type="region of interest" description="Disordered" evidence="3">
    <location>
        <begin position="22"/>
        <end position="52"/>
    </location>
</feature>
<feature type="compositionally biased region" description="Basic residues" evidence="3">
    <location>
        <begin position="27"/>
        <end position="37"/>
    </location>
</feature>
<feature type="compositionally biased region" description="Low complexity" evidence="3">
    <location>
        <begin position="38"/>
        <end position="51"/>
    </location>
</feature>
<feature type="modified residue" description="N-acetylserine" evidence="2">
    <location>
        <position position="2"/>
    </location>
</feature>
<feature type="modified residue" description="Phosphoserine" evidence="2">
    <location>
        <position position="41"/>
    </location>
</feature>
<feature type="modified residue" description="Phosphoserine" evidence="2">
    <location>
        <position position="42"/>
    </location>
</feature>
<feature type="modified residue" description="Phosphoserine" evidence="2">
    <location>
        <position position="49"/>
    </location>
</feature>
<reference key="1">
    <citation type="journal article" date="2004" name="Genome Res.">
        <title>The status, quality, and expansion of the NIH full-length cDNA project: the Mammalian Gene Collection (MGC).</title>
        <authorList>
            <consortium name="The MGC Project Team"/>
        </authorList>
    </citation>
    <scope>NUCLEOTIDE SEQUENCE [LARGE SCALE MRNA]</scope>
    <source>
        <strain>C57BL/6J</strain>
        <tissue>Embryonic brain</tissue>
        <tissue>Retina</tissue>
    </source>
</reference>
<reference key="2">
    <citation type="journal article" date="2004" name="J. Mol. Biol.">
        <title>Genomic organisation, chromosomal localisation tissue distribution and developmental regulation of the PR61/B' regulatory subunits of protein phosphatase 2A in mice.</title>
        <authorList>
            <person name="Martens E."/>
            <person name="Stevens I."/>
            <person name="Janssens V."/>
            <person name="Vermeesch J."/>
            <person name="Goetz J."/>
            <person name="Goris J."/>
            <person name="Van Hoof C."/>
        </authorList>
    </citation>
    <scope>IDENTIFICATION</scope>
    <scope>TISSUE SPECIFICITY</scope>
</reference>
<reference key="3">
    <citation type="journal article" date="2010" name="Cell">
        <title>A tissue-specific atlas of mouse protein phosphorylation and expression.</title>
        <authorList>
            <person name="Huttlin E.L."/>
            <person name="Jedrychowski M.P."/>
            <person name="Elias J.E."/>
            <person name="Goswami T."/>
            <person name="Rad R."/>
            <person name="Beausoleil S.A."/>
            <person name="Villen J."/>
            <person name="Haas W."/>
            <person name="Sowa M.E."/>
            <person name="Gygi S.P."/>
        </authorList>
    </citation>
    <scope>IDENTIFICATION BY MASS SPECTROMETRY [LARGE SCALE ANALYSIS]</scope>
    <source>
        <tissue>Brain</tissue>
        <tissue>Brown adipose tissue</tissue>
        <tissue>Heart</tissue>
        <tissue>Kidney</tissue>
        <tissue>Liver</tissue>
        <tissue>Lung</tissue>
        <tissue>Pancreas</tissue>
        <tissue>Spleen</tissue>
    </source>
</reference>
<sequence length="486" mass="56347">MSSPSPPAPVACAAISASEKVDGFTRKSVRKAQRQKRSQGSSQFRSQGSQAELHPLPQLKDATSNEQQELFCQKLQQCCVLFDFMDSVSDLKSKEIKRATLNELVEYVSTNRGVIVESAYSDIVKMISANIFRTLPPSDNPDFDPEEDEPTLEASWPHIQLVYEFFLRFLESPDFQPSIAKRYIDQKFVQQLLELFDSEDPRERDFLKTVLHRIYGKFLGLRAFIRKQINNIFLRFIYETEHFNGVAELLEILGSIINGFALPLKAEHKQFLMKVLIPMHTAKGLALFHAQLAYCVVQFLEKDTTLTEPVIRGLLKFWPKTCSQKEVMFLGEIEEILDVIEPTQFKKIEEPLFKQISKCVSSSHFQVAERALYFWNNEYILSLIEENIDKILPIMFASLYKISKEHWNQTIVALVYNVLKTLMEMNGKLFDDLTSSYKAERQREKKKELEREELWKKLEELQLKKALEKQNNAYNMHSIRSSTSAK</sequence>
<accession>Q6PD03</accession>
<accession>Q8R1U7</accession>
<proteinExistence type="evidence at protein level"/>
<name>2A5A_MOUSE</name>
<comment type="function">
    <text>The B regulatory subunit might modulate substrate selectivity and catalytic activity, and might also direct the localization of the catalytic enzyme to a particular subcellular compartment.</text>
</comment>
<comment type="subunit">
    <text evidence="1">PP2A consists of a common heterodimeric core enzyme, composed of a 36 kDa catalytic subunit (subunit C) and a 65 kDa constant regulatory subunit (PR65 or subunit A), that associates with a variety of regulatory subunits. Proteins that associate with the core dimer include three families of regulatory subunits B (the R2/B/PR55/B55, R3/B''/PR72/PR130/PR59 and R5/B'/B56 families), the 48 kDa variable regulatory subunit, viral proteins, and cell signaling molecules. Interacts with SGO1 (By similarity).</text>
</comment>
<comment type="subcellular location">
    <subcellularLocation>
        <location evidence="1">Cytoplasm</location>
    </subcellularLocation>
    <subcellularLocation>
        <location evidence="1">Nucleus</location>
    </subcellularLocation>
    <subcellularLocation>
        <location evidence="1">Chromosome</location>
        <location evidence="1">Centromere</location>
    </subcellularLocation>
    <text evidence="1">From mitotic prophase to metaphase, localizes at the inner centromere between a pair of sister kinetochores. Decreased expression at the onset of anaphase (By similarity).</text>
</comment>
<comment type="tissue specificity">
    <text evidence="4">Widely expressed with highest levels in thymus and ovary.</text>
</comment>
<comment type="similarity">
    <text evidence="5">Belongs to the phosphatase 2A regulatory subunit B56 family.</text>
</comment>
<comment type="sequence caution" evidence="5">
    <conflict type="erroneous initiation">
        <sequence resource="EMBL-CDS" id="AAH23062"/>
    </conflict>
</comment>
<dbReference type="EMBL" id="BC023062">
    <property type="protein sequence ID" value="AAH23062.1"/>
    <property type="status" value="ALT_INIT"/>
    <property type="molecule type" value="mRNA"/>
</dbReference>
<dbReference type="EMBL" id="BC059026">
    <property type="protein sequence ID" value="AAH59026.1"/>
    <property type="molecule type" value="mRNA"/>
</dbReference>
<dbReference type="EMBL" id="BK000647">
    <property type="protein sequence ID" value="DAA01426.1"/>
    <property type="molecule type" value="mRNA"/>
</dbReference>
<dbReference type="CCDS" id="CCDS15620.1"/>
<dbReference type="RefSeq" id="NP_659129.2">
    <property type="nucleotide sequence ID" value="NM_144880.4"/>
</dbReference>
<dbReference type="SMR" id="Q6PD03"/>
<dbReference type="BioGRID" id="230562">
    <property type="interactions" value="12"/>
</dbReference>
<dbReference type="FunCoup" id="Q6PD03">
    <property type="interactions" value="2914"/>
</dbReference>
<dbReference type="IntAct" id="Q6PD03">
    <property type="interactions" value="1"/>
</dbReference>
<dbReference type="MINT" id="Q6PD03"/>
<dbReference type="STRING" id="10090.ENSMUSP00000070726"/>
<dbReference type="iPTMnet" id="Q6PD03"/>
<dbReference type="PhosphoSitePlus" id="Q6PD03"/>
<dbReference type="jPOST" id="Q6PD03"/>
<dbReference type="PaxDb" id="10090-ENSMUSP00000070726"/>
<dbReference type="ProteomicsDB" id="296442"/>
<dbReference type="Pumba" id="Q6PD03"/>
<dbReference type="Antibodypedia" id="34606">
    <property type="antibodies" value="270 antibodies from 36 providers"/>
</dbReference>
<dbReference type="DNASU" id="226849"/>
<dbReference type="Ensembl" id="ENSMUST00000067976.9">
    <property type="protein sequence ID" value="ENSMUSP00000070726.4"/>
    <property type="gene ID" value="ENSMUSG00000026626.12"/>
</dbReference>
<dbReference type="GeneID" id="226849"/>
<dbReference type="KEGG" id="mmu:226849"/>
<dbReference type="UCSC" id="uc007eci.1">
    <property type="organism name" value="mouse"/>
</dbReference>
<dbReference type="AGR" id="MGI:2388479"/>
<dbReference type="CTD" id="5525"/>
<dbReference type="MGI" id="MGI:2388479">
    <property type="gene designation" value="Ppp2r5a"/>
</dbReference>
<dbReference type="VEuPathDB" id="HostDB:ENSMUSG00000026626"/>
<dbReference type="eggNOG" id="KOG2085">
    <property type="taxonomic scope" value="Eukaryota"/>
</dbReference>
<dbReference type="GeneTree" id="ENSGT01030000234620"/>
<dbReference type="HOGENOM" id="CLU_012437_4_0_1"/>
<dbReference type="InParanoid" id="Q6PD03"/>
<dbReference type="OMA" id="LIYPEVI"/>
<dbReference type="OrthoDB" id="10264446at2759"/>
<dbReference type="PhylomeDB" id="Q6PD03"/>
<dbReference type="TreeFam" id="TF105556"/>
<dbReference type="Reactome" id="R-MMU-141444">
    <property type="pathway name" value="Amplification of signal from unattached kinetochores via a MAD2 inhibitory signal"/>
</dbReference>
<dbReference type="Reactome" id="R-MMU-195253">
    <property type="pathway name" value="Degradation of beta-catenin by the destruction complex"/>
</dbReference>
<dbReference type="Reactome" id="R-MMU-196299">
    <property type="pathway name" value="Beta-catenin phosphorylation cascade"/>
</dbReference>
<dbReference type="Reactome" id="R-MMU-2467813">
    <property type="pathway name" value="Separation of Sister Chromatids"/>
</dbReference>
<dbReference type="Reactome" id="R-MMU-2500257">
    <property type="pathway name" value="Resolution of Sister Chromatid Cohesion"/>
</dbReference>
<dbReference type="Reactome" id="R-MMU-389356">
    <property type="pathway name" value="Co-stimulation by CD28"/>
</dbReference>
<dbReference type="Reactome" id="R-MMU-389513">
    <property type="pathway name" value="Co-inhibition by CTLA4"/>
</dbReference>
<dbReference type="Reactome" id="R-MMU-432142">
    <property type="pathway name" value="Platelet sensitization by LDL"/>
</dbReference>
<dbReference type="Reactome" id="R-MMU-4641262">
    <property type="pathway name" value="Disassembly of the destruction complex and recruitment of AXIN to the membrane"/>
</dbReference>
<dbReference type="Reactome" id="R-MMU-5663220">
    <property type="pathway name" value="RHO GTPases Activate Formins"/>
</dbReference>
<dbReference type="Reactome" id="R-MMU-5673000">
    <property type="pathway name" value="RAF activation"/>
</dbReference>
<dbReference type="Reactome" id="R-MMU-5675221">
    <property type="pathway name" value="Negative regulation of MAPK pathway"/>
</dbReference>
<dbReference type="Reactome" id="R-MMU-6811558">
    <property type="pathway name" value="PI5P, PP2A and IER3 Regulate PI3K/AKT Signaling"/>
</dbReference>
<dbReference type="Reactome" id="R-MMU-68877">
    <property type="pathway name" value="Mitotic Prometaphase"/>
</dbReference>
<dbReference type="Reactome" id="R-MMU-9648025">
    <property type="pathway name" value="EML4 and NUDC in mitotic spindle formation"/>
</dbReference>
<dbReference type="Reactome" id="R-MMU-9833482">
    <property type="pathway name" value="PKR-mediated signaling"/>
</dbReference>
<dbReference type="BioGRID-ORCS" id="226849">
    <property type="hits" value="1 hit in 78 CRISPR screens"/>
</dbReference>
<dbReference type="ChiTaRS" id="Ppp2r5a">
    <property type="organism name" value="mouse"/>
</dbReference>
<dbReference type="PRO" id="PR:Q6PD03"/>
<dbReference type="Proteomes" id="UP000000589">
    <property type="component" value="Chromosome 1"/>
</dbReference>
<dbReference type="RNAct" id="Q6PD03">
    <property type="molecule type" value="protein"/>
</dbReference>
<dbReference type="Bgee" id="ENSMUSG00000026626">
    <property type="expression patterns" value="Expressed in granulocyte and 122 other cell types or tissues"/>
</dbReference>
<dbReference type="ExpressionAtlas" id="Q6PD03">
    <property type="expression patterns" value="baseline and differential"/>
</dbReference>
<dbReference type="GO" id="GO:0005813">
    <property type="term" value="C:centrosome"/>
    <property type="evidence" value="ECO:0007669"/>
    <property type="project" value="Ensembl"/>
</dbReference>
<dbReference type="GO" id="GO:0000775">
    <property type="term" value="C:chromosome, centromeric region"/>
    <property type="evidence" value="ECO:0007669"/>
    <property type="project" value="UniProtKB-SubCell"/>
</dbReference>
<dbReference type="GO" id="GO:0005829">
    <property type="term" value="C:cytosol"/>
    <property type="evidence" value="ECO:0000304"/>
    <property type="project" value="Reactome"/>
</dbReference>
<dbReference type="GO" id="GO:0031430">
    <property type="term" value="C:M band"/>
    <property type="evidence" value="ECO:0000314"/>
    <property type="project" value="BHF-UCL"/>
</dbReference>
<dbReference type="GO" id="GO:0005634">
    <property type="term" value="C:nucleus"/>
    <property type="evidence" value="ECO:0007669"/>
    <property type="project" value="UniProtKB-SubCell"/>
</dbReference>
<dbReference type="GO" id="GO:0005886">
    <property type="term" value="C:plasma membrane"/>
    <property type="evidence" value="ECO:0007669"/>
    <property type="project" value="Ensembl"/>
</dbReference>
<dbReference type="GO" id="GO:0000159">
    <property type="term" value="C:protein phosphatase type 2A complex"/>
    <property type="evidence" value="ECO:0007669"/>
    <property type="project" value="Ensembl"/>
</dbReference>
<dbReference type="GO" id="GO:0030018">
    <property type="term" value="C:Z disc"/>
    <property type="evidence" value="ECO:0000314"/>
    <property type="project" value="MGI"/>
</dbReference>
<dbReference type="GO" id="GO:0019900">
    <property type="term" value="F:kinase binding"/>
    <property type="evidence" value="ECO:0007669"/>
    <property type="project" value="Ensembl"/>
</dbReference>
<dbReference type="GO" id="GO:0019210">
    <property type="term" value="F:kinase inhibitor activity"/>
    <property type="evidence" value="ECO:0007669"/>
    <property type="project" value="Ensembl"/>
</dbReference>
<dbReference type="GO" id="GO:0072542">
    <property type="term" value="F:protein phosphatase activator activity"/>
    <property type="evidence" value="ECO:0007669"/>
    <property type="project" value="Ensembl"/>
</dbReference>
<dbReference type="GO" id="GO:1903077">
    <property type="term" value="P:negative regulation of protein localization to plasma membrane"/>
    <property type="evidence" value="ECO:0007669"/>
    <property type="project" value="Ensembl"/>
</dbReference>
<dbReference type="GO" id="GO:0007165">
    <property type="term" value="P:signal transduction"/>
    <property type="evidence" value="ECO:0007669"/>
    <property type="project" value="InterPro"/>
</dbReference>
<dbReference type="FunFam" id="1.25.10.10:FF:000010">
    <property type="entry name" value="Serine/threonine-protein phosphatase 2A 56 kDa regulatory subunit"/>
    <property type="match status" value="1"/>
</dbReference>
<dbReference type="Gene3D" id="1.25.10.10">
    <property type="entry name" value="Leucine-rich Repeat Variant"/>
    <property type="match status" value="1"/>
</dbReference>
<dbReference type="InterPro" id="IPR011989">
    <property type="entry name" value="ARM-like"/>
</dbReference>
<dbReference type="InterPro" id="IPR016024">
    <property type="entry name" value="ARM-type_fold"/>
</dbReference>
<dbReference type="InterPro" id="IPR002554">
    <property type="entry name" value="PP2A_B56"/>
</dbReference>
<dbReference type="PANTHER" id="PTHR10257">
    <property type="entry name" value="SERINE/THREONINE PROTEIN PHOSPHATASE 2A PP2A REGULATORY SUBUNIT B"/>
    <property type="match status" value="1"/>
</dbReference>
<dbReference type="PANTHER" id="PTHR10257:SF6">
    <property type="entry name" value="SERINE_THREONINE-PROTEIN PHOSPHATASE 2A 56 KDA REGULATORY SUBUNIT ALPHA ISOFORM"/>
    <property type="match status" value="1"/>
</dbReference>
<dbReference type="Pfam" id="PF01603">
    <property type="entry name" value="B56"/>
    <property type="match status" value="1"/>
</dbReference>
<dbReference type="PIRSF" id="PIRSF028043">
    <property type="entry name" value="PP2A_B56"/>
    <property type="match status" value="1"/>
</dbReference>
<dbReference type="SUPFAM" id="SSF48371">
    <property type="entry name" value="ARM repeat"/>
    <property type="match status" value="1"/>
</dbReference>
<protein>
    <recommendedName>
        <fullName>Serine/threonine-protein phosphatase 2A 56 kDa regulatory subunit alpha isoform</fullName>
    </recommendedName>
    <alternativeName>
        <fullName>PP2A B subunit isoform B'-alpha</fullName>
    </alternativeName>
    <alternativeName>
        <fullName>PP2A B subunit isoform B56-alpha</fullName>
    </alternativeName>
    <alternativeName>
        <fullName>PP2A B subunit isoform PR61-alpha</fullName>
        <shortName>PR61alpha</shortName>
    </alternativeName>
    <alternativeName>
        <fullName>PP2A B subunit isoform R5-alpha</fullName>
    </alternativeName>
</protein>
<keyword id="KW-0007">Acetylation</keyword>
<keyword id="KW-0137">Centromere</keyword>
<keyword id="KW-0158">Chromosome</keyword>
<keyword id="KW-0963">Cytoplasm</keyword>
<keyword id="KW-0539">Nucleus</keyword>
<keyword id="KW-0597">Phosphoprotein</keyword>
<keyword id="KW-1185">Reference proteome</keyword>
<evidence type="ECO:0000250" key="1"/>
<evidence type="ECO:0000250" key="2">
    <source>
        <dbReference type="UniProtKB" id="Q15172"/>
    </source>
</evidence>
<evidence type="ECO:0000256" key="3">
    <source>
        <dbReference type="SAM" id="MobiDB-lite"/>
    </source>
</evidence>
<evidence type="ECO:0000269" key="4">
    <source>
    </source>
</evidence>
<evidence type="ECO:0000305" key="5"/>
<gene>
    <name type="primary">Ppp2r5a</name>
</gene>
<organism>
    <name type="scientific">Mus musculus</name>
    <name type="common">Mouse</name>
    <dbReference type="NCBI Taxonomy" id="10090"/>
    <lineage>
        <taxon>Eukaryota</taxon>
        <taxon>Metazoa</taxon>
        <taxon>Chordata</taxon>
        <taxon>Craniata</taxon>
        <taxon>Vertebrata</taxon>
        <taxon>Euteleostomi</taxon>
        <taxon>Mammalia</taxon>
        <taxon>Eutheria</taxon>
        <taxon>Euarchontoglires</taxon>
        <taxon>Glires</taxon>
        <taxon>Rodentia</taxon>
        <taxon>Myomorpha</taxon>
        <taxon>Muroidea</taxon>
        <taxon>Muridae</taxon>
        <taxon>Murinae</taxon>
        <taxon>Mus</taxon>
        <taxon>Mus</taxon>
    </lineage>
</organism>